<proteinExistence type="inferred from homology"/>
<reference key="1">
    <citation type="journal article" date="2008" name="DNA Res.">
        <title>Determination of the genome sequence of Porphyromonas gingivalis strain ATCC 33277 and genomic comparison with strain W83 revealed extensive genome rearrangements in P. gingivalis.</title>
        <authorList>
            <person name="Naito M."/>
            <person name="Hirakawa H."/>
            <person name="Yamashita A."/>
            <person name="Ohara N."/>
            <person name="Shoji M."/>
            <person name="Yukitake H."/>
            <person name="Nakayama K."/>
            <person name="Toh H."/>
            <person name="Yoshimura F."/>
            <person name="Kuhara S."/>
            <person name="Hattori M."/>
            <person name="Hayashi T."/>
            <person name="Nakayama K."/>
        </authorList>
    </citation>
    <scope>NUCLEOTIDE SEQUENCE [LARGE SCALE GENOMIC DNA]</scope>
    <source>
        <strain>ATCC 33277 / DSM 20709 / CIP 103683 / JCM 12257 / NCTC 11834 / 2561</strain>
    </source>
</reference>
<name>KITH_PORG3</name>
<accession>B2RJJ6</accession>
<feature type="chain" id="PRO_1000095435" description="Thymidine kinase">
    <location>
        <begin position="1"/>
        <end position="204"/>
    </location>
</feature>
<feature type="active site" description="Proton acceptor" evidence="1">
    <location>
        <position position="96"/>
    </location>
</feature>
<feature type="binding site" evidence="1">
    <location>
        <begin position="23"/>
        <end position="30"/>
    </location>
    <ligand>
        <name>ATP</name>
        <dbReference type="ChEBI" id="CHEBI:30616"/>
    </ligand>
</feature>
<feature type="binding site" evidence="1">
    <location>
        <begin position="95"/>
        <end position="98"/>
    </location>
    <ligand>
        <name>ATP</name>
        <dbReference type="ChEBI" id="CHEBI:30616"/>
    </ligand>
</feature>
<feature type="binding site" evidence="1">
    <location>
        <position position="152"/>
    </location>
    <ligand>
        <name>Zn(2+)</name>
        <dbReference type="ChEBI" id="CHEBI:29105"/>
    </ligand>
</feature>
<feature type="binding site" evidence="1">
    <location>
        <position position="155"/>
    </location>
    <ligand>
        <name>Zn(2+)</name>
        <dbReference type="ChEBI" id="CHEBI:29105"/>
    </ligand>
</feature>
<feature type="binding site" evidence="1">
    <location>
        <position position="184"/>
    </location>
    <ligand>
        <name>Zn(2+)</name>
        <dbReference type="ChEBI" id="CHEBI:29105"/>
    </ligand>
</feature>
<feature type="binding site" evidence="1">
    <location>
        <position position="187"/>
    </location>
    <ligand>
        <name>Zn(2+)</name>
        <dbReference type="ChEBI" id="CHEBI:29105"/>
    </ligand>
</feature>
<comment type="catalytic activity">
    <reaction evidence="1">
        <text>thymidine + ATP = dTMP + ADP + H(+)</text>
        <dbReference type="Rhea" id="RHEA:19129"/>
        <dbReference type="ChEBI" id="CHEBI:15378"/>
        <dbReference type="ChEBI" id="CHEBI:17748"/>
        <dbReference type="ChEBI" id="CHEBI:30616"/>
        <dbReference type="ChEBI" id="CHEBI:63528"/>
        <dbReference type="ChEBI" id="CHEBI:456216"/>
        <dbReference type="EC" id="2.7.1.21"/>
    </reaction>
</comment>
<comment type="subunit">
    <text evidence="1">Homotetramer.</text>
</comment>
<comment type="subcellular location">
    <subcellularLocation>
        <location evidence="1">Cytoplasm</location>
    </subcellularLocation>
</comment>
<comment type="similarity">
    <text evidence="1">Belongs to the thymidine kinase family.</text>
</comment>
<gene>
    <name evidence="1" type="primary">tdk</name>
    <name type="ordered locus">PGN_1022</name>
</gene>
<keyword id="KW-0067">ATP-binding</keyword>
<keyword id="KW-0963">Cytoplasm</keyword>
<keyword id="KW-0237">DNA synthesis</keyword>
<keyword id="KW-0418">Kinase</keyword>
<keyword id="KW-0479">Metal-binding</keyword>
<keyword id="KW-0547">Nucleotide-binding</keyword>
<keyword id="KW-0808">Transferase</keyword>
<keyword id="KW-0862">Zinc</keyword>
<organism>
    <name type="scientific">Porphyromonas gingivalis (strain ATCC 33277 / DSM 20709 / CIP 103683 / JCM 12257 / NCTC 11834 / 2561)</name>
    <dbReference type="NCBI Taxonomy" id="431947"/>
    <lineage>
        <taxon>Bacteria</taxon>
        <taxon>Pseudomonadati</taxon>
        <taxon>Bacteroidota</taxon>
        <taxon>Bacteroidia</taxon>
        <taxon>Bacteroidales</taxon>
        <taxon>Porphyromonadaceae</taxon>
        <taxon>Porphyromonas</taxon>
    </lineage>
</organism>
<sequence length="204" mass="22711">MDYEIENNHADSIRRGSIEVICGSMFSGKTEELLRRLRRAKIARQTVEIFKPTIDIRYDETDVVSHDKNAIASAPVDNSANILLLSSQVDVVGIDEAQFFDEGLVEVAQQLADQGVRVVIAGLDMDFRRQPFGPMPGLCAIADSVTKVHAVCVECGRLASYSFRRVQGDQQVMLGELNEYSPLCRTCYRKCSSPPQTEEIHSTI</sequence>
<dbReference type="EC" id="2.7.1.21" evidence="1"/>
<dbReference type="EMBL" id="AP009380">
    <property type="protein sequence ID" value="BAG33541.1"/>
    <property type="molecule type" value="Genomic_DNA"/>
</dbReference>
<dbReference type="RefSeq" id="WP_012457965.1">
    <property type="nucleotide sequence ID" value="NC_010729.1"/>
</dbReference>
<dbReference type="SMR" id="B2RJJ6"/>
<dbReference type="GeneID" id="29256232"/>
<dbReference type="KEGG" id="pgn:PGN_1022"/>
<dbReference type="eggNOG" id="COG1435">
    <property type="taxonomic scope" value="Bacteria"/>
</dbReference>
<dbReference type="HOGENOM" id="CLU_064400_3_0_10"/>
<dbReference type="OrthoDB" id="9781579at2"/>
<dbReference type="BioCyc" id="PGIN431947:G1G2V-1155-MONOMER"/>
<dbReference type="Proteomes" id="UP000008842">
    <property type="component" value="Chromosome"/>
</dbReference>
<dbReference type="GO" id="GO:0005829">
    <property type="term" value="C:cytosol"/>
    <property type="evidence" value="ECO:0007669"/>
    <property type="project" value="TreeGrafter"/>
</dbReference>
<dbReference type="GO" id="GO:0005524">
    <property type="term" value="F:ATP binding"/>
    <property type="evidence" value="ECO:0007669"/>
    <property type="project" value="UniProtKB-UniRule"/>
</dbReference>
<dbReference type="GO" id="GO:0004797">
    <property type="term" value="F:thymidine kinase activity"/>
    <property type="evidence" value="ECO:0007669"/>
    <property type="project" value="UniProtKB-UniRule"/>
</dbReference>
<dbReference type="GO" id="GO:0008270">
    <property type="term" value="F:zinc ion binding"/>
    <property type="evidence" value="ECO:0007669"/>
    <property type="project" value="UniProtKB-UniRule"/>
</dbReference>
<dbReference type="GO" id="GO:0071897">
    <property type="term" value="P:DNA biosynthetic process"/>
    <property type="evidence" value="ECO:0007669"/>
    <property type="project" value="UniProtKB-KW"/>
</dbReference>
<dbReference type="GO" id="GO:0046104">
    <property type="term" value="P:thymidine metabolic process"/>
    <property type="evidence" value="ECO:0007669"/>
    <property type="project" value="TreeGrafter"/>
</dbReference>
<dbReference type="FunFam" id="3.40.50.300:FF:000384">
    <property type="entry name" value="Thymidine kinase"/>
    <property type="match status" value="1"/>
</dbReference>
<dbReference type="Gene3D" id="3.30.60.20">
    <property type="match status" value="1"/>
</dbReference>
<dbReference type="Gene3D" id="3.40.50.300">
    <property type="entry name" value="P-loop containing nucleotide triphosphate hydrolases"/>
    <property type="match status" value="1"/>
</dbReference>
<dbReference type="HAMAP" id="MF_00124">
    <property type="entry name" value="Thymidine_kinase"/>
    <property type="match status" value="1"/>
</dbReference>
<dbReference type="InterPro" id="IPR027417">
    <property type="entry name" value="P-loop_NTPase"/>
</dbReference>
<dbReference type="InterPro" id="IPR001267">
    <property type="entry name" value="Thymidine_kinase"/>
</dbReference>
<dbReference type="NCBIfam" id="NF003296">
    <property type="entry name" value="PRK04296.1-1"/>
    <property type="match status" value="1"/>
</dbReference>
<dbReference type="PANTHER" id="PTHR11441">
    <property type="entry name" value="THYMIDINE KINASE"/>
    <property type="match status" value="1"/>
</dbReference>
<dbReference type="PANTHER" id="PTHR11441:SF0">
    <property type="entry name" value="THYMIDINE KINASE, CYTOSOLIC"/>
    <property type="match status" value="1"/>
</dbReference>
<dbReference type="Pfam" id="PF00265">
    <property type="entry name" value="TK"/>
    <property type="match status" value="1"/>
</dbReference>
<dbReference type="PIRSF" id="PIRSF035805">
    <property type="entry name" value="TK_cell"/>
    <property type="match status" value="1"/>
</dbReference>
<dbReference type="SUPFAM" id="SSF57716">
    <property type="entry name" value="Glucocorticoid receptor-like (DNA-binding domain)"/>
    <property type="match status" value="1"/>
</dbReference>
<dbReference type="SUPFAM" id="SSF52540">
    <property type="entry name" value="P-loop containing nucleoside triphosphate hydrolases"/>
    <property type="match status" value="1"/>
</dbReference>
<evidence type="ECO:0000255" key="1">
    <source>
        <dbReference type="HAMAP-Rule" id="MF_00124"/>
    </source>
</evidence>
<protein>
    <recommendedName>
        <fullName evidence="1">Thymidine kinase</fullName>
        <ecNumber evidence="1">2.7.1.21</ecNumber>
    </recommendedName>
</protein>